<feature type="chain" id="PRO_0000303281" description="tRNA N6-adenosine threonylcarbamoyltransferase">
    <location>
        <begin position="1"/>
        <end position="347"/>
    </location>
</feature>
<feature type="binding site" evidence="1">
    <location>
        <position position="113"/>
    </location>
    <ligand>
        <name>Fe cation</name>
        <dbReference type="ChEBI" id="CHEBI:24875"/>
    </ligand>
</feature>
<feature type="binding site" evidence="1">
    <location>
        <position position="117"/>
    </location>
    <ligand>
        <name>Fe cation</name>
        <dbReference type="ChEBI" id="CHEBI:24875"/>
    </ligand>
</feature>
<feature type="binding site" evidence="1">
    <location>
        <begin position="136"/>
        <end position="140"/>
    </location>
    <ligand>
        <name>substrate</name>
    </ligand>
</feature>
<feature type="binding site" evidence="1">
    <location>
        <position position="170"/>
    </location>
    <ligand>
        <name>substrate</name>
    </ligand>
</feature>
<feature type="binding site" evidence="1">
    <location>
        <position position="183"/>
    </location>
    <ligand>
        <name>substrate</name>
    </ligand>
</feature>
<feature type="binding site" evidence="1">
    <location>
        <position position="187"/>
    </location>
    <ligand>
        <name>substrate</name>
    </ligand>
</feature>
<feature type="binding site" evidence="1">
    <location>
        <position position="282"/>
    </location>
    <ligand>
        <name>substrate</name>
    </ligand>
</feature>
<feature type="binding site" evidence="1">
    <location>
        <position position="310"/>
    </location>
    <ligand>
        <name>Fe cation</name>
        <dbReference type="ChEBI" id="CHEBI:24875"/>
    </ligand>
</feature>
<sequence length="347" mass="36072">MSEPVVLGIESTCDETAAAIVRGRELLSNVVASSMEEHARYGGVIPEIASRAHAEAFVPCVSKALVDANMTLADVDAIAVSAGPGLAGCLAVGVSGAKALAWAANKPIYGINHVIGHIAVTQLQFGPFPKDTLALIVSGGHTSLLHVEDMPRKIDVVGTTLDDAAGECFDKVARLLGFPYPGGPHIDRHGQNGDPHAIKVPMGLTQGKAGAAHPYDFSFSGVKTAVARWVESEQAAGHEIPVDDVCASLADSVATVLARKAMRGCRQYDSNTLIVGGGFSANSQLRAKLLEFGENYGVDVRIPQIKLCTDNGAMVAMLGVNLVEAGVAPSAPDFPIDSAMPLTKVSM</sequence>
<evidence type="ECO:0000255" key="1">
    <source>
        <dbReference type="HAMAP-Rule" id="MF_01445"/>
    </source>
</evidence>
<comment type="function">
    <text evidence="1">Required for the formation of a threonylcarbamoyl group on adenosine at position 37 (t(6)A37) in tRNAs that read codons beginning with adenine. Is involved in the transfer of the threonylcarbamoyl moiety of threonylcarbamoyl-AMP (TC-AMP) to the N6 group of A37, together with TsaE and TsaB. TsaD likely plays a direct catalytic role in this reaction.</text>
</comment>
<comment type="catalytic activity">
    <reaction evidence="1">
        <text>L-threonylcarbamoyladenylate + adenosine(37) in tRNA = N(6)-L-threonylcarbamoyladenosine(37) in tRNA + AMP + H(+)</text>
        <dbReference type="Rhea" id="RHEA:37059"/>
        <dbReference type="Rhea" id="RHEA-COMP:10162"/>
        <dbReference type="Rhea" id="RHEA-COMP:10163"/>
        <dbReference type="ChEBI" id="CHEBI:15378"/>
        <dbReference type="ChEBI" id="CHEBI:73682"/>
        <dbReference type="ChEBI" id="CHEBI:74411"/>
        <dbReference type="ChEBI" id="CHEBI:74418"/>
        <dbReference type="ChEBI" id="CHEBI:456215"/>
        <dbReference type="EC" id="2.3.1.234"/>
    </reaction>
</comment>
<comment type="cofactor">
    <cofactor evidence="1">
        <name>Fe(2+)</name>
        <dbReference type="ChEBI" id="CHEBI:29033"/>
    </cofactor>
    <text evidence="1">Binds 1 Fe(2+) ion per subunit.</text>
</comment>
<comment type="subcellular location">
    <subcellularLocation>
        <location evidence="1">Cytoplasm</location>
    </subcellularLocation>
</comment>
<comment type="similarity">
    <text evidence="1">Belongs to the KAE1 / TsaD family.</text>
</comment>
<proteinExistence type="inferred from homology"/>
<gene>
    <name evidence="1" type="primary">tsaD</name>
    <name type="synonym">gcp</name>
    <name type="ordered locus">BL1457</name>
</gene>
<keyword id="KW-0012">Acyltransferase</keyword>
<keyword id="KW-0963">Cytoplasm</keyword>
<keyword id="KW-0408">Iron</keyword>
<keyword id="KW-0479">Metal-binding</keyword>
<keyword id="KW-1185">Reference proteome</keyword>
<keyword id="KW-0808">Transferase</keyword>
<keyword id="KW-0819">tRNA processing</keyword>
<protein>
    <recommendedName>
        <fullName evidence="1">tRNA N6-adenosine threonylcarbamoyltransferase</fullName>
        <ecNumber evidence="1">2.3.1.234</ecNumber>
    </recommendedName>
    <alternativeName>
        <fullName evidence="1">N6-L-threonylcarbamoyladenine synthase</fullName>
        <shortName evidence="1">t(6)A synthase</shortName>
    </alternativeName>
    <alternativeName>
        <fullName evidence="1">t(6)A37 threonylcarbamoyladenosine biosynthesis protein TsaD</fullName>
    </alternativeName>
    <alternativeName>
        <fullName evidence="1">tRNA threonylcarbamoyladenosine biosynthesis protein TsaD</fullName>
    </alternativeName>
</protein>
<organism>
    <name type="scientific">Bifidobacterium longum (strain NCC 2705)</name>
    <dbReference type="NCBI Taxonomy" id="206672"/>
    <lineage>
        <taxon>Bacteria</taxon>
        <taxon>Bacillati</taxon>
        <taxon>Actinomycetota</taxon>
        <taxon>Actinomycetes</taxon>
        <taxon>Bifidobacteriales</taxon>
        <taxon>Bifidobacteriaceae</taxon>
        <taxon>Bifidobacterium</taxon>
    </lineage>
</organism>
<dbReference type="EC" id="2.3.1.234" evidence="1"/>
<dbReference type="EMBL" id="AE014295">
    <property type="protein sequence ID" value="AAN25252.1"/>
    <property type="molecule type" value="Genomic_DNA"/>
</dbReference>
<dbReference type="RefSeq" id="NP_696616.1">
    <property type="nucleotide sequence ID" value="NC_004307.2"/>
</dbReference>
<dbReference type="RefSeq" id="WP_007054363.1">
    <property type="nucleotide sequence ID" value="NC_004307.2"/>
</dbReference>
<dbReference type="SMR" id="Q8G4D1"/>
<dbReference type="STRING" id="206672.BL1457"/>
<dbReference type="EnsemblBacteria" id="AAN25252">
    <property type="protein sequence ID" value="AAN25252"/>
    <property type="gene ID" value="BL1457"/>
</dbReference>
<dbReference type="GeneID" id="69578368"/>
<dbReference type="KEGG" id="blo:BL1457"/>
<dbReference type="PATRIC" id="fig|206672.9.peg.317"/>
<dbReference type="HOGENOM" id="CLU_023208_0_2_11"/>
<dbReference type="OrthoDB" id="9806197at2"/>
<dbReference type="PhylomeDB" id="Q8G4D1"/>
<dbReference type="Proteomes" id="UP000000439">
    <property type="component" value="Chromosome"/>
</dbReference>
<dbReference type="GO" id="GO:0005737">
    <property type="term" value="C:cytoplasm"/>
    <property type="evidence" value="ECO:0007669"/>
    <property type="project" value="UniProtKB-SubCell"/>
</dbReference>
<dbReference type="GO" id="GO:0005506">
    <property type="term" value="F:iron ion binding"/>
    <property type="evidence" value="ECO:0007669"/>
    <property type="project" value="UniProtKB-UniRule"/>
</dbReference>
<dbReference type="GO" id="GO:0061711">
    <property type="term" value="F:N(6)-L-threonylcarbamoyladenine synthase activity"/>
    <property type="evidence" value="ECO:0007669"/>
    <property type="project" value="UniProtKB-EC"/>
</dbReference>
<dbReference type="GO" id="GO:0002949">
    <property type="term" value="P:tRNA threonylcarbamoyladenosine modification"/>
    <property type="evidence" value="ECO:0007669"/>
    <property type="project" value="UniProtKB-UniRule"/>
</dbReference>
<dbReference type="CDD" id="cd24133">
    <property type="entry name" value="ASKHA_NBD_TsaD_bac"/>
    <property type="match status" value="1"/>
</dbReference>
<dbReference type="FunFam" id="3.30.420.40:FF:000012">
    <property type="entry name" value="tRNA N6-adenosine threonylcarbamoyltransferase"/>
    <property type="match status" value="1"/>
</dbReference>
<dbReference type="FunFam" id="3.30.420.40:FF:000040">
    <property type="entry name" value="tRNA N6-adenosine threonylcarbamoyltransferase"/>
    <property type="match status" value="1"/>
</dbReference>
<dbReference type="Gene3D" id="3.30.420.40">
    <property type="match status" value="2"/>
</dbReference>
<dbReference type="HAMAP" id="MF_01445">
    <property type="entry name" value="TsaD"/>
    <property type="match status" value="1"/>
</dbReference>
<dbReference type="InterPro" id="IPR043129">
    <property type="entry name" value="ATPase_NBD"/>
</dbReference>
<dbReference type="InterPro" id="IPR000905">
    <property type="entry name" value="Gcp-like_dom"/>
</dbReference>
<dbReference type="InterPro" id="IPR017861">
    <property type="entry name" value="KAE1/TsaD"/>
</dbReference>
<dbReference type="InterPro" id="IPR022450">
    <property type="entry name" value="TsaD"/>
</dbReference>
<dbReference type="NCBIfam" id="TIGR00329">
    <property type="entry name" value="gcp_kae1"/>
    <property type="match status" value="1"/>
</dbReference>
<dbReference type="NCBIfam" id="TIGR03723">
    <property type="entry name" value="T6A_TsaD_YgjD"/>
    <property type="match status" value="1"/>
</dbReference>
<dbReference type="PANTHER" id="PTHR11735">
    <property type="entry name" value="TRNA N6-ADENOSINE THREONYLCARBAMOYLTRANSFERASE"/>
    <property type="match status" value="1"/>
</dbReference>
<dbReference type="PANTHER" id="PTHR11735:SF6">
    <property type="entry name" value="TRNA N6-ADENOSINE THREONYLCARBAMOYLTRANSFERASE, MITOCHONDRIAL"/>
    <property type="match status" value="1"/>
</dbReference>
<dbReference type="Pfam" id="PF00814">
    <property type="entry name" value="TsaD"/>
    <property type="match status" value="1"/>
</dbReference>
<dbReference type="PRINTS" id="PR00789">
    <property type="entry name" value="OSIALOPTASE"/>
</dbReference>
<dbReference type="SUPFAM" id="SSF53067">
    <property type="entry name" value="Actin-like ATPase domain"/>
    <property type="match status" value="1"/>
</dbReference>
<accession>Q8G4D1</accession>
<name>TSAD_BIFLO</name>
<reference key="1">
    <citation type="journal article" date="2002" name="Proc. Natl. Acad. Sci. U.S.A.">
        <title>The genome sequence of Bifidobacterium longum reflects its adaptation to the human gastrointestinal tract.</title>
        <authorList>
            <person name="Schell M.A."/>
            <person name="Karmirantzou M."/>
            <person name="Snel B."/>
            <person name="Vilanova D."/>
            <person name="Berger B."/>
            <person name="Pessi G."/>
            <person name="Zwahlen M.-C."/>
            <person name="Desiere F."/>
            <person name="Bork P."/>
            <person name="Delley M."/>
            <person name="Pridmore R.D."/>
            <person name="Arigoni F."/>
        </authorList>
    </citation>
    <scope>NUCLEOTIDE SEQUENCE [LARGE SCALE GENOMIC DNA]</scope>
    <source>
        <strain>NCC 2705</strain>
    </source>
</reference>